<gene>
    <name evidence="8" type="primary">DMAC2</name>
    <name evidence="8" type="synonym">ATP5SL</name>
</gene>
<name>DMAC2_HUMAN</name>
<keyword id="KW-0025">Alternative splicing</keyword>
<keyword id="KW-0496">Mitochondrion</keyword>
<keyword id="KW-0597">Phosphoprotein</keyword>
<keyword id="KW-1267">Proteomics identification</keyword>
<keyword id="KW-1185">Reference proteome</keyword>
<comment type="function">
    <text evidence="4">Required for the assembly of the mitochondrial NADH:ubiquinone oxidoreductase complex (complex I). Involved in the assembly of the distal region of complex I.</text>
</comment>
<comment type="subunit">
    <text evidence="3">Interacts with incompletely assembled mitochondrial NADH:ubiquinone oxidoreductase complex (complex I).</text>
</comment>
<comment type="interaction">
    <interactant intactId="EBI-22730614">
        <id>Q9NW81-2</id>
    </interactant>
    <interactant intactId="EBI-3867333">
        <id>A8MQ03</id>
        <label>CYSRT1</label>
    </interactant>
    <organismsDiffer>false</organismsDiffer>
    <experiments>3</experiments>
</comment>
<comment type="subcellular location">
    <subcellularLocation>
        <location evidence="1">Mitochondrion</location>
    </subcellularLocation>
</comment>
<comment type="alternative products">
    <event type="alternative splicing"/>
    <isoform>
        <id>Q9NW81-1</id>
        <name>1</name>
        <sequence type="displayed"/>
    </isoform>
    <isoform>
        <id>Q9NW81-2</id>
        <name>2</name>
        <sequence type="described" ref="VSP_031270 VSP_031271"/>
    </isoform>
    <isoform>
        <id>Q9NW81-3</id>
        <name>3</name>
        <sequence type="described" ref="VSP_043807 VSP_031271"/>
    </isoform>
    <isoform>
        <id>Q9NW81-4</id>
        <name>4</name>
        <sequence type="described" ref="VSP_043807"/>
    </isoform>
    <isoform>
        <id>Q9NW81-5</id>
        <name>5</name>
        <sequence type="described" ref="VSP_031270"/>
    </isoform>
    <isoform>
        <id>Q9NW81-6</id>
        <name>6</name>
        <sequence type="described" ref="VSP_031271"/>
    </isoform>
</comment>
<comment type="similarity">
    <text evidence="7">Belongs to the ATP synthase subunit s family.</text>
</comment>
<feature type="chain" id="PRO_0000318695" description="Distal membrane-arm assembly complex protein 2">
    <location>
        <begin position="1"/>
        <end position="257"/>
    </location>
</feature>
<feature type="modified residue" description="Phosphoserine" evidence="9">
    <location>
        <position position="253"/>
    </location>
</feature>
<feature type="splice variant" id="VSP_043807" description="In isoform 3 and isoform 4." evidence="5">
    <original>MAAPWA</original>
    <variation>MWDLVLEDRRMN</variation>
    <location>
        <begin position="1"/>
        <end position="6"/>
    </location>
</feature>
<feature type="splice variant" id="VSP_031270" description="In isoform 2 and isoform 5." evidence="5 6">
    <location>
        <begin position="73"/>
        <end position="99"/>
    </location>
</feature>
<feature type="splice variant" id="VSP_031271" description="In isoform 2, isoform 3 and isoform 6." evidence="5 6">
    <original>LRLKELQSLSLQRCCHVDDWCLSRLYPLADSLQELSLAGCPRISERGLACLHHLQNLRRLDISDLPAVSNPGLTQILVEEMLPNCEVVGVDWAEGLKSGPEEQPRDTASPVPA</original>
    <variation>RTSAGWTSRTSLPCPTLASLRYWWRRCCPIARLWESTGLRA</variation>
    <location>
        <begin position="145"/>
        <end position="257"/>
    </location>
</feature>
<feature type="sequence variant" id="VAR_057798" description="In dbSNP:rs2231938.">
    <original>R</original>
    <variation>C</variation>
    <location>
        <position position="9"/>
    </location>
</feature>
<feature type="sequence variant" id="VAR_057799" description="In dbSNP:rs2231939." evidence="2">
    <original>H</original>
    <variation>R</variation>
    <location>
        <position position="23"/>
    </location>
</feature>
<feature type="sequence variant" id="VAR_057800" description="In dbSNP:rs2231940." evidence="2">
    <original>N</original>
    <variation>S</variation>
    <location>
        <position position="34"/>
    </location>
</feature>
<feature type="sequence variant" id="VAR_060165" description="In dbSNP:rs1043413." evidence="2">
    <original>C</original>
    <variation>S</variation>
    <location>
        <position position="159"/>
    </location>
</feature>
<feature type="sequence variant" id="VAR_057801" description="In dbSNP:rs2231943.">
    <original>E</original>
    <variation>K</variation>
    <location>
        <position position="230"/>
    </location>
</feature>
<feature type="sequence conflict" description="In Ref. 1; BAG60467." evidence="7" ref="1">
    <original>A</original>
    <variation>S</variation>
    <location>
        <position position="128"/>
    </location>
</feature>
<reference key="1">
    <citation type="journal article" date="2004" name="Nat. Genet.">
        <title>Complete sequencing and characterization of 21,243 full-length human cDNAs.</title>
        <authorList>
            <person name="Ota T."/>
            <person name="Suzuki Y."/>
            <person name="Nishikawa T."/>
            <person name="Otsuki T."/>
            <person name="Sugiyama T."/>
            <person name="Irie R."/>
            <person name="Wakamatsu A."/>
            <person name="Hayashi K."/>
            <person name="Sato H."/>
            <person name="Nagai K."/>
            <person name="Kimura K."/>
            <person name="Makita H."/>
            <person name="Sekine M."/>
            <person name="Obayashi M."/>
            <person name="Nishi T."/>
            <person name="Shibahara T."/>
            <person name="Tanaka T."/>
            <person name="Ishii S."/>
            <person name="Yamamoto J."/>
            <person name="Saito K."/>
            <person name="Kawai Y."/>
            <person name="Isono Y."/>
            <person name="Nakamura Y."/>
            <person name="Nagahari K."/>
            <person name="Murakami K."/>
            <person name="Yasuda T."/>
            <person name="Iwayanagi T."/>
            <person name="Wagatsuma M."/>
            <person name="Shiratori A."/>
            <person name="Sudo H."/>
            <person name="Hosoiri T."/>
            <person name="Kaku Y."/>
            <person name="Kodaira H."/>
            <person name="Kondo H."/>
            <person name="Sugawara M."/>
            <person name="Takahashi M."/>
            <person name="Kanda K."/>
            <person name="Yokoi T."/>
            <person name="Furuya T."/>
            <person name="Kikkawa E."/>
            <person name="Omura Y."/>
            <person name="Abe K."/>
            <person name="Kamihara K."/>
            <person name="Katsuta N."/>
            <person name="Sato K."/>
            <person name="Tanikawa M."/>
            <person name="Yamazaki M."/>
            <person name="Ninomiya K."/>
            <person name="Ishibashi T."/>
            <person name="Yamashita H."/>
            <person name="Murakawa K."/>
            <person name="Fujimori K."/>
            <person name="Tanai H."/>
            <person name="Kimata M."/>
            <person name="Watanabe M."/>
            <person name="Hiraoka S."/>
            <person name="Chiba Y."/>
            <person name="Ishida S."/>
            <person name="Ono Y."/>
            <person name="Takiguchi S."/>
            <person name="Watanabe S."/>
            <person name="Yosida M."/>
            <person name="Hotuta T."/>
            <person name="Kusano J."/>
            <person name="Kanehori K."/>
            <person name="Takahashi-Fujii A."/>
            <person name="Hara H."/>
            <person name="Tanase T.-O."/>
            <person name="Nomura Y."/>
            <person name="Togiya S."/>
            <person name="Komai F."/>
            <person name="Hara R."/>
            <person name="Takeuchi K."/>
            <person name="Arita M."/>
            <person name="Imose N."/>
            <person name="Musashino K."/>
            <person name="Yuuki H."/>
            <person name="Oshima A."/>
            <person name="Sasaki N."/>
            <person name="Aotsuka S."/>
            <person name="Yoshikawa Y."/>
            <person name="Matsunawa H."/>
            <person name="Ichihara T."/>
            <person name="Shiohata N."/>
            <person name="Sano S."/>
            <person name="Moriya S."/>
            <person name="Momiyama H."/>
            <person name="Satoh N."/>
            <person name="Takami S."/>
            <person name="Terashima Y."/>
            <person name="Suzuki O."/>
            <person name="Nakagawa S."/>
            <person name="Senoh A."/>
            <person name="Mizoguchi H."/>
            <person name="Goto Y."/>
            <person name="Shimizu F."/>
            <person name="Wakebe H."/>
            <person name="Hishigaki H."/>
            <person name="Watanabe T."/>
            <person name="Sugiyama A."/>
            <person name="Takemoto M."/>
            <person name="Kawakami B."/>
            <person name="Yamazaki M."/>
            <person name="Watanabe K."/>
            <person name="Kumagai A."/>
            <person name="Itakura S."/>
            <person name="Fukuzumi Y."/>
            <person name="Fujimori Y."/>
            <person name="Komiyama M."/>
            <person name="Tashiro H."/>
            <person name="Tanigami A."/>
            <person name="Fujiwara T."/>
            <person name="Ono T."/>
            <person name="Yamada K."/>
            <person name="Fujii Y."/>
            <person name="Ozaki K."/>
            <person name="Hirao M."/>
            <person name="Ohmori Y."/>
            <person name="Kawabata A."/>
            <person name="Hikiji T."/>
            <person name="Kobatake N."/>
            <person name="Inagaki H."/>
            <person name="Ikema Y."/>
            <person name="Okamoto S."/>
            <person name="Okitani R."/>
            <person name="Kawakami T."/>
            <person name="Noguchi S."/>
            <person name="Itoh T."/>
            <person name="Shigeta K."/>
            <person name="Senba T."/>
            <person name="Matsumura K."/>
            <person name="Nakajima Y."/>
            <person name="Mizuno T."/>
            <person name="Morinaga M."/>
            <person name="Sasaki M."/>
            <person name="Togashi T."/>
            <person name="Oyama M."/>
            <person name="Hata H."/>
            <person name="Watanabe M."/>
            <person name="Komatsu T."/>
            <person name="Mizushima-Sugano J."/>
            <person name="Satoh T."/>
            <person name="Shirai Y."/>
            <person name="Takahashi Y."/>
            <person name="Nakagawa K."/>
            <person name="Okumura K."/>
            <person name="Nagase T."/>
            <person name="Nomura N."/>
            <person name="Kikuchi H."/>
            <person name="Masuho Y."/>
            <person name="Yamashita R."/>
            <person name="Nakai K."/>
            <person name="Yada T."/>
            <person name="Nakamura Y."/>
            <person name="Ohara O."/>
            <person name="Isogai T."/>
            <person name="Sugano S."/>
        </authorList>
    </citation>
    <scope>NUCLEOTIDE SEQUENCE [LARGE SCALE MRNA] (ISOFORMS 1; 3; 4; 5 AND 6)</scope>
    <scope>VARIANTS ARG-23; SER-34 AND SER-159</scope>
    <source>
        <tissue>Lung</tissue>
        <tissue>Neuroblastoma</tissue>
        <tissue>Testis</tissue>
    </source>
</reference>
<reference key="2">
    <citation type="journal article" date="2004" name="Nature">
        <title>The DNA sequence and biology of human chromosome 19.</title>
        <authorList>
            <person name="Grimwood J."/>
            <person name="Gordon L.A."/>
            <person name="Olsen A.S."/>
            <person name="Terry A."/>
            <person name="Schmutz J."/>
            <person name="Lamerdin J.E."/>
            <person name="Hellsten U."/>
            <person name="Goodstein D."/>
            <person name="Couronne O."/>
            <person name="Tran-Gyamfi M."/>
            <person name="Aerts A."/>
            <person name="Altherr M."/>
            <person name="Ashworth L."/>
            <person name="Bajorek E."/>
            <person name="Black S."/>
            <person name="Branscomb E."/>
            <person name="Caenepeel S."/>
            <person name="Carrano A.V."/>
            <person name="Caoile C."/>
            <person name="Chan Y.M."/>
            <person name="Christensen M."/>
            <person name="Cleland C.A."/>
            <person name="Copeland A."/>
            <person name="Dalin E."/>
            <person name="Dehal P."/>
            <person name="Denys M."/>
            <person name="Detter J.C."/>
            <person name="Escobar J."/>
            <person name="Flowers D."/>
            <person name="Fotopulos D."/>
            <person name="Garcia C."/>
            <person name="Georgescu A.M."/>
            <person name="Glavina T."/>
            <person name="Gomez M."/>
            <person name="Gonzales E."/>
            <person name="Groza M."/>
            <person name="Hammon N."/>
            <person name="Hawkins T."/>
            <person name="Haydu L."/>
            <person name="Ho I."/>
            <person name="Huang W."/>
            <person name="Israni S."/>
            <person name="Jett J."/>
            <person name="Kadner K."/>
            <person name="Kimball H."/>
            <person name="Kobayashi A."/>
            <person name="Larionov V."/>
            <person name="Leem S.-H."/>
            <person name="Lopez F."/>
            <person name="Lou Y."/>
            <person name="Lowry S."/>
            <person name="Malfatti S."/>
            <person name="Martinez D."/>
            <person name="McCready P.M."/>
            <person name="Medina C."/>
            <person name="Morgan J."/>
            <person name="Nelson K."/>
            <person name="Nolan M."/>
            <person name="Ovcharenko I."/>
            <person name="Pitluck S."/>
            <person name="Pollard M."/>
            <person name="Popkie A.P."/>
            <person name="Predki P."/>
            <person name="Quan G."/>
            <person name="Ramirez L."/>
            <person name="Rash S."/>
            <person name="Retterer J."/>
            <person name="Rodriguez A."/>
            <person name="Rogers S."/>
            <person name="Salamov A."/>
            <person name="Salazar A."/>
            <person name="She X."/>
            <person name="Smith D."/>
            <person name="Slezak T."/>
            <person name="Solovyev V."/>
            <person name="Thayer N."/>
            <person name="Tice H."/>
            <person name="Tsai M."/>
            <person name="Ustaszewska A."/>
            <person name="Vo N."/>
            <person name="Wagner M."/>
            <person name="Wheeler J."/>
            <person name="Wu K."/>
            <person name="Xie G."/>
            <person name="Yang J."/>
            <person name="Dubchak I."/>
            <person name="Furey T.S."/>
            <person name="DeJong P."/>
            <person name="Dickson M."/>
            <person name="Gordon D."/>
            <person name="Eichler E.E."/>
            <person name="Pennacchio L.A."/>
            <person name="Richardson P."/>
            <person name="Stubbs L."/>
            <person name="Rokhsar D.S."/>
            <person name="Myers R.M."/>
            <person name="Rubin E.M."/>
            <person name="Lucas S.M."/>
        </authorList>
    </citation>
    <scope>NUCLEOTIDE SEQUENCE [LARGE SCALE GENOMIC DNA]</scope>
</reference>
<reference key="3">
    <citation type="submission" date="2005-07" db="EMBL/GenBank/DDBJ databases">
        <authorList>
            <person name="Mural R.J."/>
            <person name="Istrail S."/>
            <person name="Sutton G.G."/>
            <person name="Florea L."/>
            <person name="Halpern A.L."/>
            <person name="Mobarry C.M."/>
            <person name="Lippert R."/>
            <person name="Walenz B."/>
            <person name="Shatkay H."/>
            <person name="Dew I."/>
            <person name="Miller J.R."/>
            <person name="Flanigan M.J."/>
            <person name="Edwards N.J."/>
            <person name="Bolanos R."/>
            <person name="Fasulo D."/>
            <person name="Halldorsson B.V."/>
            <person name="Hannenhalli S."/>
            <person name="Turner R."/>
            <person name="Yooseph S."/>
            <person name="Lu F."/>
            <person name="Nusskern D.R."/>
            <person name="Shue B.C."/>
            <person name="Zheng X.H."/>
            <person name="Zhong F."/>
            <person name="Delcher A.L."/>
            <person name="Huson D.H."/>
            <person name="Kravitz S.A."/>
            <person name="Mouchard L."/>
            <person name="Reinert K."/>
            <person name="Remington K.A."/>
            <person name="Clark A.G."/>
            <person name="Waterman M.S."/>
            <person name="Eichler E.E."/>
            <person name="Adams M.D."/>
            <person name="Hunkapiller M.W."/>
            <person name="Myers E.W."/>
            <person name="Venter J.C."/>
        </authorList>
    </citation>
    <scope>NUCLEOTIDE SEQUENCE [LARGE SCALE GENOMIC DNA]</scope>
</reference>
<reference key="4">
    <citation type="journal article" date="2004" name="Genome Res.">
        <title>The status, quality, and expansion of the NIH full-length cDNA project: the Mammalian Gene Collection (MGC).</title>
        <authorList>
            <consortium name="The MGC Project Team"/>
        </authorList>
    </citation>
    <scope>NUCLEOTIDE SEQUENCE [LARGE SCALE MRNA] (ISOFORM 2)</scope>
    <source>
        <tissue>Bone marrow</tissue>
    </source>
</reference>
<reference key="5">
    <citation type="journal article" date="2013" name="J. Proteome Res.">
        <title>Toward a comprehensive characterization of a human cancer cell phosphoproteome.</title>
        <authorList>
            <person name="Zhou H."/>
            <person name="Di Palma S."/>
            <person name="Preisinger C."/>
            <person name="Peng M."/>
            <person name="Polat A.N."/>
            <person name="Heck A.J."/>
            <person name="Mohammed S."/>
        </authorList>
    </citation>
    <scope>PHOSPHORYLATION [LARGE SCALE ANALYSIS] AT SER-253</scope>
    <scope>IDENTIFICATION BY MASS SPECTROMETRY [LARGE SCALE ANALYSIS]</scope>
    <source>
        <tissue>Erythroleukemia</tissue>
    </source>
</reference>
<reference key="6">
    <citation type="journal article" date="2013" name="Proc. Natl. Acad. Sci. U.S.A.">
        <title>Assembly factors for the membrane arm of human complex I.</title>
        <authorList>
            <person name="Andrews B."/>
            <person name="Carroll J."/>
            <person name="Ding S."/>
            <person name="Fearnley I.M."/>
            <person name="Walker J.E."/>
        </authorList>
    </citation>
    <scope>SUBUNIT</scope>
</reference>
<reference key="7">
    <citation type="journal article" date="2015" name="Proteomics">
        <title>N-terminome analysis of the human mitochondrial proteome.</title>
        <authorList>
            <person name="Vaca Jacome A.S."/>
            <person name="Rabilloud T."/>
            <person name="Schaeffer-Reiss C."/>
            <person name="Rompais M."/>
            <person name="Ayoub D."/>
            <person name="Lane L."/>
            <person name="Bairoch A."/>
            <person name="Van Dorsselaer A."/>
            <person name="Carapito C."/>
        </authorList>
    </citation>
    <scope>IDENTIFICATION BY MASS SPECTROMETRY [LARGE SCALE ANALYSIS]</scope>
</reference>
<reference key="8">
    <citation type="journal article" date="2016" name="Nature">
        <title>Accessory subunits are integral for assembly and function of human mitochondrial complex I.</title>
        <authorList>
            <person name="Stroud D.A."/>
            <person name="Surgenor E.E."/>
            <person name="Formosa L.E."/>
            <person name="Reljic B."/>
            <person name="Frazier A.E."/>
            <person name="Dibley M.G."/>
            <person name="Osellame L.D."/>
            <person name="Stait T."/>
            <person name="Beilharz T.H."/>
            <person name="Thorburn D.R."/>
            <person name="Salim A."/>
            <person name="Ryan M.T."/>
        </authorList>
    </citation>
    <scope>FUNCTION</scope>
</reference>
<protein>
    <recommendedName>
        <fullName evidence="7">Distal membrane-arm assembly complex protein 2</fullName>
    </recommendedName>
    <alternativeName>
        <fullName evidence="7">ATP synthase subunit s-like protein</fullName>
    </alternativeName>
</protein>
<organism>
    <name type="scientific">Homo sapiens</name>
    <name type="common">Human</name>
    <dbReference type="NCBI Taxonomy" id="9606"/>
    <lineage>
        <taxon>Eukaryota</taxon>
        <taxon>Metazoa</taxon>
        <taxon>Chordata</taxon>
        <taxon>Craniata</taxon>
        <taxon>Vertebrata</taxon>
        <taxon>Euteleostomi</taxon>
        <taxon>Mammalia</taxon>
        <taxon>Eutheria</taxon>
        <taxon>Euarchontoglires</taxon>
        <taxon>Primates</taxon>
        <taxon>Haplorrhini</taxon>
        <taxon>Catarrhini</taxon>
        <taxon>Hominidae</taxon>
        <taxon>Homo</taxon>
    </lineage>
</organism>
<evidence type="ECO:0000250" key="1">
    <source>
        <dbReference type="UniProtKB" id="Q9D7K5"/>
    </source>
</evidence>
<evidence type="ECO:0000269" key="2">
    <source>
    </source>
</evidence>
<evidence type="ECO:0000269" key="3">
    <source>
    </source>
</evidence>
<evidence type="ECO:0000269" key="4">
    <source>
    </source>
</evidence>
<evidence type="ECO:0000303" key="5">
    <source>
    </source>
</evidence>
<evidence type="ECO:0000303" key="6">
    <source>
    </source>
</evidence>
<evidence type="ECO:0000305" key="7"/>
<evidence type="ECO:0000312" key="8">
    <source>
        <dbReference type="HGNC" id="HGNC:25496"/>
    </source>
</evidence>
<evidence type="ECO:0007744" key="9">
    <source>
    </source>
</evidence>
<accession>Q9NW81</accession>
<accession>B4DDC0</accession>
<accession>B4DMZ4</accession>
<accession>B4DP55</accession>
<accession>B4DXE8</accession>
<accession>F5H4W7</accession>
<accession>K7EMF6</accession>
<accession>Q96D43</accession>
<proteinExistence type="evidence at protein level"/>
<sequence>MAAPWASLRLVAPMWNGRIRGIHRLGAAVAPEGNQKKKRTILQFLTNYFYDVEALRDYLLQREMYKVHEKNRSYTWLEKQHGPYGAGAFFILKQGGAVKFRDKEWIRPDKYGHFSQEFWNFCEVPVEAVDAGDCDINYEGLDNLLRLKELQSLSLQRCCHVDDWCLSRLYPLADSLQELSLAGCPRISERGLACLHHLQNLRRLDISDLPAVSNPGLTQILVEEMLPNCEVVGVDWAEGLKSGPEEQPRDTASPVPA</sequence>
<dbReference type="EMBL" id="AK001103">
    <property type="protein sequence ID" value="BAA91503.1"/>
    <property type="molecule type" value="mRNA"/>
</dbReference>
<dbReference type="EMBL" id="AK293132">
    <property type="protein sequence ID" value="BAG56681.1"/>
    <property type="molecule type" value="mRNA"/>
</dbReference>
<dbReference type="EMBL" id="AK297698">
    <property type="protein sequence ID" value="BAG60056.1"/>
    <property type="molecule type" value="mRNA"/>
</dbReference>
<dbReference type="EMBL" id="AK298197">
    <property type="protein sequence ID" value="BAG60467.1"/>
    <property type="molecule type" value="mRNA"/>
</dbReference>
<dbReference type="EMBL" id="AK301940">
    <property type="protein sequence ID" value="BAG63360.1"/>
    <property type="molecule type" value="mRNA"/>
</dbReference>
<dbReference type="EMBL" id="AC011526">
    <property type="status" value="NOT_ANNOTATED_CDS"/>
    <property type="molecule type" value="Genomic_DNA"/>
</dbReference>
<dbReference type="EMBL" id="AC005795">
    <property type="status" value="NOT_ANNOTATED_CDS"/>
    <property type="molecule type" value="Genomic_DNA"/>
</dbReference>
<dbReference type="EMBL" id="AC005945">
    <property type="status" value="NOT_ANNOTATED_CDS"/>
    <property type="molecule type" value="Genomic_DNA"/>
</dbReference>
<dbReference type="EMBL" id="CH471126">
    <property type="protein sequence ID" value="EAW57042.1"/>
    <property type="molecule type" value="Genomic_DNA"/>
</dbReference>
<dbReference type="EMBL" id="CH471126">
    <property type="protein sequence ID" value="EAW57043.1"/>
    <property type="molecule type" value="Genomic_DNA"/>
</dbReference>
<dbReference type="EMBL" id="BC013323">
    <property type="protein sequence ID" value="AAH13323.1"/>
    <property type="molecule type" value="mRNA"/>
</dbReference>
<dbReference type="CCDS" id="CCDS33032.1">
    <molecule id="Q9NW81-1"/>
</dbReference>
<dbReference type="CCDS" id="CCDS54269.1">
    <molecule id="Q9NW81-3"/>
</dbReference>
<dbReference type="CCDS" id="CCDS54270.1">
    <molecule id="Q9NW81-4"/>
</dbReference>
<dbReference type="CCDS" id="CCDS54271.1">
    <molecule id="Q9NW81-5"/>
</dbReference>
<dbReference type="CCDS" id="CCDS59389.1">
    <molecule id="Q9NW81-2"/>
</dbReference>
<dbReference type="CCDS" id="CCDS59390.1">
    <molecule id="Q9NW81-6"/>
</dbReference>
<dbReference type="RefSeq" id="NP_001161339.1">
    <molecule id="Q9NW81-4"/>
    <property type="nucleotide sequence ID" value="NM_001167867.2"/>
</dbReference>
<dbReference type="RefSeq" id="NP_001161340.1">
    <molecule id="Q9NW81-3"/>
    <property type="nucleotide sequence ID" value="NM_001167868.2"/>
</dbReference>
<dbReference type="RefSeq" id="NP_001161341.1">
    <molecule id="Q9NW81-6"/>
    <property type="nucleotide sequence ID" value="NM_001167869.2"/>
</dbReference>
<dbReference type="RefSeq" id="NP_001161342.1">
    <molecule id="Q9NW81-2"/>
    <property type="nucleotide sequence ID" value="NM_001167870.2"/>
</dbReference>
<dbReference type="RefSeq" id="NP_001161343.1">
    <molecule id="Q9NW81-5"/>
    <property type="nucleotide sequence ID" value="NM_001167871.2"/>
</dbReference>
<dbReference type="RefSeq" id="NP_001307767.1">
    <property type="nucleotide sequence ID" value="NM_001320838.1"/>
</dbReference>
<dbReference type="RefSeq" id="NP_001307769.1">
    <property type="nucleotide sequence ID" value="NM_001320840.1"/>
</dbReference>
<dbReference type="RefSeq" id="NP_001307770.1">
    <property type="nucleotide sequence ID" value="NM_001320841.1"/>
</dbReference>
<dbReference type="RefSeq" id="NP_060505.2">
    <molecule id="Q9NW81-1"/>
    <property type="nucleotide sequence ID" value="NM_018035.3"/>
</dbReference>
<dbReference type="SMR" id="Q9NW81"/>
<dbReference type="BioGRID" id="120411">
    <property type="interactions" value="26"/>
</dbReference>
<dbReference type="FunCoup" id="Q9NW81">
    <property type="interactions" value="49"/>
</dbReference>
<dbReference type="IntAct" id="Q9NW81">
    <property type="interactions" value="6"/>
</dbReference>
<dbReference type="STRING" id="9606.ENSP00000403910"/>
<dbReference type="GlyGen" id="Q9NW81">
    <property type="glycosylation" value="1 site, 1 O-linked glycan (1 site)"/>
</dbReference>
<dbReference type="iPTMnet" id="Q9NW81"/>
<dbReference type="PhosphoSitePlus" id="Q9NW81"/>
<dbReference type="SwissPalm" id="Q9NW81"/>
<dbReference type="BioMuta" id="DMAC2"/>
<dbReference type="DMDM" id="296439436"/>
<dbReference type="jPOST" id="Q9NW81"/>
<dbReference type="MassIVE" id="Q9NW81"/>
<dbReference type="PaxDb" id="9606-ENSP00000403910"/>
<dbReference type="PeptideAtlas" id="Q9NW81"/>
<dbReference type="ProteomicsDB" id="26695"/>
<dbReference type="ProteomicsDB" id="82910">
    <molecule id="Q9NW81-1"/>
</dbReference>
<dbReference type="ProteomicsDB" id="82911">
    <molecule id="Q9NW81-2"/>
</dbReference>
<dbReference type="ProteomicsDB" id="82912">
    <molecule id="Q9NW81-3"/>
</dbReference>
<dbReference type="Pumba" id="Q9NW81"/>
<dbReference type="Antibodypedia" id="62280">
    <property type="antibodies" value="31 antibodies from 9 providers"/>
</dbReference>
<dbReference type="DNASU" id="55101"/>
<dbReference type="Ensembl" id="ENST00000221943.14">
    <molecule id="Q9NW81-1"/>
    <property type="protein sequence ID" value="ENSP00000221943.8"/>
    <property type="gene ID" value="ENSG00000105341.19"/>
</dbReference>
<dbReference type="Ensembl" id="ENST00000301183.15">
    <molecule id="Q9NW81-3"/>
    <property type="protein sequence ID" value="ENSP00000301183.9"/>
    <property type="gene ID" value="ENSG00000105341.19"/>
</dbReference>
<dbReference type="Ensembl" id="ENST00000417807.7">
    <molecule id="Q9NW81-4"/>
    <property type="protein sequence ID" value="ENSP00000403910.2"/>
    <property type="gene ID" value="ENSG00000105341.19"/>
</dbReference>
<dbReference type="Ensembl" id="ENST00000438807.7">
    <molecule id="Q9NW81-2"/>
    <property type="protein sequence ID" value="ENSP00000397413.3"/>
    <property type="gene ID" value="ENSG00000105341.19"/>
</dbReference>
<dbReference type="Ensembl" id="ENST00000589970.5">
    <molecule id="Q9NW81-6"/>
    <property type="protein sequence ID" value="ENSP00000466485.1"/>
    <property type="gene ID" value="ENSG00000105341.19"/>
</dbReference>
<dbReference type="Ensembl" id="ENST00000592922.6">
    <molecule id="Q9NW81-5"/>
    <property type="protein sequence ID" value="ENSP00000467205.1"/>
    <property type="gene ID" value="ENSG00000105341.19"/>
</dbReference>
<dbReference type="GeneID" id="55101"/>
<dbReference type="KEGG" id="hsa:55101"/>
<dbReference type="MANE-Select" id="ENST00000221943.14">
    <property type="protein sequence ID" value="ENSP00000221943.8"/>
    <property type="RefSeq nucleotide sequence ID" value="NM_018035.3"/>
    <property type="RefSeq protein sequence ID" value="NP_060505.2"/>
</dbReference>
<dbReference type="UCSC" id="uc002oqv.4">
    <molecule id="Q9NW81-1"/>
    <property type="organism name" value="human"/>
</dbReference>
<dbReference type="AGR" id="HGNC:25496"/>
<dbReference type="CTD" id="55101"/>
<dbReference type="DisGeNET" id="55101"/>
<dbReference type="GeneCards" id="DMAC2"/>
<dbReference type="HGNC" id="HGNC:25496">
    <property type="gene designation" value="DMAC2"/>
</dbReference>
<dbReference type="HPA" id="ENSG00000105341">
    <property type="expression patterns" value="Low tissue specificity"/>
</dbReference>
<dbReference type="MalaCards" id="DMAC2"/>
<dbReference type="neXtProt" id="NX_Q9NW81"/>
<dbReference type="OpenTargets" id="ENSG00000105341"/>
<dbReference type="PharmGKB" id="PA162377263"/>
<dbReference type="VEuPathDB" id="HostDB:ENSG00000105341"/>
<dbReference type="eggNOG" id="KOG3864">
    <property type="taxonomic scope" value="Eukaryota"/>
</dbReference>
<dbReference type="GeneTree" id="ENSGT00940000160500"/>
<dbReference type="HOGENOM" id="CLU_1421014_0_0_1"/>
<dbReference type="InParanoid" id="Q9NW81"/>
<dbReference type="OMA" id="GFRFAGQ"/>
<dbReference type="OrthoDB" id="5859291at2759"/>
<dbReference type="PAN-GO" id="Q9NW81">
    <property type="GO annotations" value="3 GO annotations based on evolutionary models"/>
</dbReference>
<dbReference type="PhylomeDB" id="Q9NW81"/>
<dbReference type="TreeFam" id="TF315274"/>
<dbReference type="PathwayCommons" id="Q9NW81"/>
<dbReference type="Reactome" id="R-HSA-6799198">
    <property type="pathway name" value="Complex I biogenesis"/>
</dbReference>
<dbReference type="SignaLink" id="Q9NW81"/>
<dbReference type="BioGRID-ORCS" id="55101">
    <property type="hits" value="78 hits in 1164 CRISPR screens"/>
</dbReference>
<dbReference type="ChiTaRS" id="ATP5SL">
    <property type="organism name" value="human"/>
</dbReference>
<dbReference type="GeneWiki" id="ATP5SL"/>
<dbReference type="GenomeRNAi" id="55101"/>
<dbReference type="Pharos" id="Q9NW81">
    <property type="development level" value="Tbio"/>
</dbReference>
<dbReference type="PRO" id="PR:Q9NW81"/>
<dbReference type="Proteomes" id="UP000005640">
    <property type="component" value="Chromosome 19"/>
</dbReference>
<dbReference type="RNAct" id="Q9NW81">
    <property type="molecule type" value="protein"/>
</dbReference>
<dbReference type="Bgee" id="ENSG00000105341">
    <property type="expression patterns" value="Expressed in apex of heart and 204 other cell types or tissues"/>
</dbReference>
<dbReference type="ExpressionAtlas" id="Q9NW81">
    <property type="expression patterns" value="baseline and differential"/>
</dbReference>
<dbReference type="GO" id="GO:0005739">
    <property type="term" value="C:mitochondrion"/>
    <property type="evidence" value="ECO:0006056"/>
    <property type="project" value="FlyBase"/>
</dbReference>
<dbReference type="GO" id="GO:0019005">
    <property type="term" value="C:SCF ubiquitin ligase complex"/>
    <property type="evidence" value="ECO:0000318"/>
    <property type="project" value="GO_Central"/>
</dbReference>
<dbReference type="GO" id="GO:0032981">
    <property type="term" value="P:mitochondrial respiratory chain complex I assembly"/>
    <property type="evidence" value="ECO:0000315"/>
    <property type="project" value="UniProtKB"/>
</dbReference>
<dbReference type="GO" id="GO:0031146">
    <property type="term" value="P:SCF-dependent proteasomal ubiquitin-dependent protein catabolic process"/>
    <property type="evidence" value="ECO:0000318"/>
    <property type="project" value="GO_Central"/>
</dbReference>
<dbReference type="FunFam" id="3.80.10.10:FF:000168">
    <property type="entry name" value="Distal membrane arm assembly complex 2"/>
    <property type="match status" value="1"/>
</dbReference>
<dbReference type="Gene3D" id="3.80.10.10">
    <property type="entry name" value="Ribonuclease Inhibitor"/>
    <property type="match status" value="1"/>
</dbReference>
<dbReference type="InterPro" id="IPR032675">
    <property type="entry name" value="LRR_dom_sf"/>
</dbReference>
<dbReference type="SUPFAM" id="SSF52047">
    <property type="entry name" value="RNI-like"/>
    <property type="match status" value="1"/>
</dbReference>